<organism>
    <name type="scientific">Escherichia coli (strain K12)</name>
    <dbReference type="NCBI Taxonomy" id="83333"/>
    <lineage>
        <taxon>Bacteria</taxon>
        <taxon>Pseudomonadati</taxon>
        <taxon>Pseudomonadota</taxon>
        <taxon>Gammaproteobacteria</taxon>
        <taxon>Enterobacterales</taxon>
        <taxon>Enterobacteriaceae</taxon>
        <taxon>Escherichia</taxon>
    </lineage>
</organism>
<proteinExistence type="evidence at protein level"/>
<protein>
    <recommendedName>
        <fullName>1,2-phenylacetyl-CoA epoxidase, subunit E</fullName>
        <ecNumber>1.-.-.-</ecNumber>
    </recommendedName>
    <alternativeName>
        <fullName>1,2-phenylacetyl-CoA epoxidase, reductase subunit</fullName>
    </alternativeName>
    <alternativeName>
        <fullName>1,2-phenylacetyl-CoA monooxygenase, subunit E</fullName>
    </alternativeName>
</protein>
<reference key="1">
    <citation type="journal article" date="1998" name="J. Biol. Chem.">
        <title>Catabolism of phenylacetic acid in Escherichia coli. Characterization of a new aerobic hybrid pathway.</title>
        <authorList>
            <person name="Ferrandez A."/>
            <person name="Minambres B."/>
            <person name="Garcia B."/>
            <person name="Olivera E.R."/>
            <person name="Luengo J.M."/>
            <person name="Garcia J.L."/>
            <person name="Diaz E."/>
        </authorList>
    </citation>
    <scope>NUCLEOTIDE SEQUENCE [GENOMIC DNA]</scope>
    <scope>FUNCTION IN PHENYLACETATE CATABOLISM</scope>
    <scope>INDUCTION</scope>
    <source>
        <strain>W / ATCC 11105 / DSM 1900</strain>
    </source>
</reference>
<reference key="2">
    <citation type="journal article" date="1996" name="DNA Res.">
        <title>A 570-kb DNA sequence of the Escherichia coli K-12 genome corresponding to the 28.0-40.1 min region on the linkage map.</title>
        <authorList>
            <person name="Aiba H."/>
            <person name="Baba T."/>
            <person name="Fujita K."/>
            <person name="Hayashi K."/>
            <person name="Inada T."/>
            <person name="Isono K."/>
            <person name="Itoh T."/>
            <person name="Kasai H."/>
            <person name="Kashimoto K."/>
            <person name="Kimura S."/>
            <person name="Kitakawa M."/>
            <person name="Kitagawa M."/>
            <person name="Makino K."/>
            <person name="Miki T."/>
            <person name="Mizobuchi K."/>
            <person name="Mori H."/>
            <person name="Mori T."/>
            <person name="Motomura K."/>
            <person name="Nakade S."/>
            <person name="Nakamura Y."/>
            <person name="Nashimoto H."/>
            <person name="Nishio Y."/>
            <person name="Oshima T."/>
            <person name="Saito N."/>
            <person name="Sampei G."/>
            <person name="Seki Y."/>
            <person name="Sivasundaram S."/>
            <person name="Tagami H."/>
            <person name="Takeda J."/>
            <person name="Takemoto K."/>
            <person name="Takeuchi Y."/>
            <person name="Wada C."/>
            <person name="Yamamoto Y."/>
            <person name="Horiuchi T."/>
        </authorList>
    </citation>
    <scope>NUCLEOTIDE SEQUENCE [LARGE SCALE GENOMIC DNA]</scope>
    <source>
        <strain>K12 / W3110 / ATCC 27325 / DSM 5911</strain>
    </source>
</reference>
<reference key="3">
    <citation type="journal article" date="1997" name="Science">
        <title>The complete genome sequence of Escherichia coli K-12.</title>
        <authorList>
            <person name="Blattner F.R."/>
            <person name="Plunkett G. III"/>
            <person name="Bloch C.A."/>
            <person name="Perna N.T."/>
            <person name="Burland V."/>
            <person name="Riley M."/>
            <person name="Collado-Vides J."/>
            <person name="Glasner J.D."/>
            <person name="Rode C.K."/>
            <person name="Mayhew G.F."/>
            <person name="Gregor J."/>
            <person name="Davis N.W."/>
            <person name="Kirkpatrick H.A."/>
            <person name="Goeden M.A."/>
            <person name="Rose D.J."/>
            <person name="Mau B."/>
            <person name="Shao Y."/>
        </authorList>
    </citation>
    <scope>NUCLEOTIDE SEQUENCE [LARGE SCALE GENOMIC DNA]</scope>
    <source>
        <strain>K12 / MG1655 / ATCC 47076</strain>
    </source>
</reference>
<reference key="4">
    <citation type="journal article" date="2006" name="Mol. Syst. Biol.">
        <title>Highly accurate genome sequences of Escherichia coli K-12 strains MG1655 and W3110.</title>
        <authorList>
            <person name="Hayashi K."/>
            <person name="Morooka N."/>
            <person name="Yamamoto Y."/>
            <person name="Fujita K."/>
            <person name="Isono K."/>
            <person name="Choi S."/>
            <person name="Ohtsubo E."/>
            <person name="Baba T."/>
            <person name="Wanner B.L."/>
            <person name="Mori H."/>
            <person name="Horiuchi T."/>
        </authorList>
    </citation>
    <scope>NUCLEOTIDE SEQUENCE [LARGE SCALE GENOMIC DNA]</scope>
    <source>
        <strain>K12 / W3110 / ATCC 27325 / DSM 5911</strain>
    </source>
</reference>
<reference key="5">
    <citation type="journal article" date="2000" name="J. Biol. Chem.">
        <title>Transcriptional regulation of the divergent paa catabolic operons for phenylacetic acid degradation in Escherichia coli.</title>
        <authorList>
            <person name="Ferrandez A."/>
            <person name="Garcia J.L."/>
            <person name="Diaz E."/>
        </authorList>
    </citation>
    <scope>INDUCTION</scope>
</reference>
<reference key="6">
    <citation type="journal article" date="2006" name="Appl. Environ. Microbiol.">
        <title>Genetic characterization of the phenylacetyl-coenzyme A oxygenase from the aerobic phenylacetic acid degradation pathway of Escherichia coli.</title>
        <authorList>
            <person name="Fernandez C."/>
            <person name="Ferrandez A."/>
            <person name="Minambres B."/>
            <person name="Diaz E."/>
            <person name="Garcia J.L."/>
        </authorList>
    </citation>
    <scope>FUNCTION AS A REDUCTASE</scope>
</reference>
<reference key="7">
    <citation type="journal article" date="2010" name="Proc. Natl. Acad. Sci. U.S.A.">
        <title>Bacterial phenylalanine and phenylacetate catabolic pathway revealed.</title>
        <authorList>
            <person name="Teufel R."/>
            <person name="Mascaraque V."/>
            <person name="Ismail W."/>
            <person name="Voss M."/>
            <person name="Perera J."/>
            <person name="Eisenreich W."/>
            <person name="Haehnel W."/>
            <person name="Fuchs G."/>
        </authorList>
    </citation>
    <scope>FUNCTION AS A MONOOXYGENASE COMPONENT</scope>
</reference>
<reference key="8">
    <citation type="journal article" date="2011" name="J. Biol. Chem.">
        <title>Structural and functional studies of the Escherichia coli phenylacetyl-CoA monooxygenase complex.</title>
        <authorList>
            <person name="Grishin A.M."/>
            <person name="Ajamian E."/>
            <person name="Tao L."/>
            <person name="Zhang L."/>
            <person name="Menard R."/>
            <person name="Cygler M."/>
        </authorList>
    </citation>
    <scope>FUNCTION AS A REDUCTASE</scope>
    <scope>COFACTOR</scope>
</reference>
<dbReference type="EC" id="1.-.-.-"/>
<dbReference type="EMBL" id="X97452">
    <property type="protein sequence ID" value="CAA66094.1"/>
    <property type="molecule type" value="Genomic_DNA"/>
</dbReference>
<dbReference type="EMBL" id="U00096">
    <property type="protein sequence ID" value="AAC74474.1"/>
    <property type="molecule type" value="Genomic_DNA"/>
</dbReference>
<dbReference type="EMBL" id="AP009048">
    <property type="protein sequence ID" value="BAA14998.2"/>
    <property type="molecule type" value="Genomic_DNA"/>
</dbReference>
<dbReference type="PIR" id="C64890">
    <property type="entry name" value="C64890"/>
</dbReference>
<dbReference type="RefSeq" id="NP_415910.1">
    <property type="nucleotide sequence ID" value="NC_000913.3"/>
</dbReference>
<dbReference type="RefSeq" id="WP_000206388.1">
    <property type="nucleotide sequence ID" value="NZ_SSZK01000012.1"/>
</dbReference>
<dbReference type="SMR" id="P76081"/>
<dbReference type="BioGRID" id="4260178">
    <property type="interactions" value="205"/>
</dbReference>
<dbReference type="ComplexPortal" id="CPX-2844">
    <property type="entry name" value="paaABCE phenylacetyl-CoA monooxygenase complex"/>
</dbReference>
<dbReference type="FunCoup" id="P76081">
    <property type="interactions" value="664"/>
</dbReference>
<dbReference type="IntAct" id="P76081">
    <property type="interactions" value="2"/>
</dbReference>
<dbReference type="STRING" id="511145.b1392"/>
<dbReference type="PaxDb" id="511145-b1392"/>
<dbReference type="EnsemblBacteria" id="AAC74474">
    <property type="protein sequence ID" value="AAC74474"/>
    <property type="gene ID" value="b1392"/>
</dbReference>
<dbReference type="GeneID" id="945962"/>
<dbReference type="KEGG" id="ecj:JW1387"/>
<dbReference type="KEGG" id="eco:b1392"/>
<dbReference type="KEGG" id="ecoc:C3026_08125"/>
<dbReference type="PATRIC" id="fig|1411691.4.peg.879"/>
<dbReference type="EchoBASE" id="EB3502"/>
<dbReference type="eggNOG" id="COG1018">
    <property type="taxonomic scope" value="Bacteria"/>
</dbReference>
<dbReference type="HOGENOM" id="CLU_003827_14_1_6"/>
<dbReference type="InParanoid" id="P76081"/>
<dbReference type="OMA" id="ACKGGMC"/>
<dbReference type="OrthoDB" id="9796486at2"/>
<dbReference type="PhylomeDB" id="P76081"/>
<dbReference type="BioCyc" id="EcoCyc:G6713-MONOMER"/>
<dbReference type="BioCyc" id="MetaCyc:G6713-MONOMER"/>
<dbReference type="UniPathway" id="UPA00930"/>
<dbReference type="PRO" id="PR:P76081"/>
<dbReference type="Proteomes" id="UP000000625">
    <property type="component" value="Chromosome"/>
</dbReference>
<dbReference type="GO" id="GO:0005829">
    <property type="term" value="C:cytosol"/>
    <property type="evidence" value="ECO:0000303"/>
    <property type="project" value="ComplexPortal"/>
</dbReference>
<dbReference type="GO" id="GO:0062077">
    <property type="term" value="C:phenylacetyl-CoA 1,2-epoxidase complex"/>
    <property type="evidence" value="ECO:0000353"/>
    <property type="project" value="ComplexPortal"/>
</dbReference>
<dbReference type="GO" id="GO:0051537">
    <property type="term" value="F:2 iron, 2 sulfur cluster binding"/>
    <property type="evidence" value="ECO:0000314"/>
    <property type="project" value="EcoCyc"/>
</dbReference>
<dbReference type="GO" id="GO:0050660">
    <property type="term" value="F:flavin adenine dinucleotide binding"/>
    <property type="evidence" value="ECO:0000314"/>
    <property type="project" value="EcoCyc"/>
</dbReference>
<dbReference type="GO" id="GO:0046872">
    <property type="term" value="F:metal ion binding"/>
    <property type="evidence" value="ECO:0007669"/>
    <property type="project" value="UniProtKB-KW"/>
</dbReference>
<dbReference type="GO" id="GO:0016491">
    <property type="term" value="F:oxidoreductase activity"/>
    <property type="evidence" value="ECO:0000318"/>
    <property type="project" value="GO_Central"/>
</dbReference>
<dbReference type="GO" id="GO:0010124">
    <property type="term" value="P:phenylacetate catabolic process"/>
    <property type="evidence" value="ECO:0000314"/>
    <property type="project" value="ComplexPortal"/>
</dbReference>
<dbReference type="CDD" id="cd00207">
    <property type="entry name" value="fer2"/>
    <property type="match status" value="1"/>
</dbReference>
<dbReference type="CDD" id="cd06214">
    <property type="entry name" value="PA_degradation_oxidoreductase_like"/>
    <property type="match status" value="1"/>
</dbReference>
<dbReference type="FunFam" id="3.40.50.80:FF:000041">
    <property type="entry name" value="1,2-phenylacetyl-CoA epoxidase subunit E"/>
    <property type="match status" value="1"/>
</dbReference>
<dbReference type="FunFam" id="3.10.20.30:FF:000023">
    <property type="entry name" value="3-ketosteroid-9-alpha-hydroxylase reductase subunit"/>
    <property type="match status" value="1"/>
</dbReference>
<dbReference type="Gene3D" id="3.10.20.30">
    <property type="match status" value="1"/>
</dbReference>
<dbReference type="Gene3D" id="3.40.50.80">
    <property type="entry name" value="Nucleotide-binding domain of ferredoxin-NADP reductase (FNR) module"/>
    <property type="match status" value="1"/>
</dbReference>
<dbReference type="Gene3D" id="2.40.30.10">
    <property type="entry name" value="Translation factors"/>
    <property type="match status" value="1"/>
</dbReference>
<dbReference type="InterPro" id="IPR036010">
    <property type="entry name" value="2Fe-2S_ferredoxin-like_sf"/>
</dbReference>
<dbReference type="InterPro" id="IPR001041">
    <property type="entry name" value="2Fe-2S_ferredoxin-type"/>
</dbReference>
<dbReference type="InterPro" id="IPR006058">
    <property type="entry name" value="2Fe2S_fd_BS"/>
</dbReference>
<dbReference type="InterPro" id="IPR012675">
    <property type="entry name" value="Beta-grasp_dom_sf"/>
</dbReference>
<dbReference type="InterPro" id="IPR008333">
    <property type="entry name" value="Cbr1-like_FAD-bd_dom"/>
</dbReference>
<dbReference type="InterPro" id="IPR017927">
    <property type="entry name" value="FAD-bd_FR_type"/>
</dbReference>
<dbReference type="InterPro" id="IPR001709">
    <property type="entry name" value="Flavoprot_Pyr_Nucl_cyt_Rdtase"/>
</dbReference>
<dbReference type="InterPro" id="IPR039261">
    <property type="entry name" value="FNR_nucleotide-bd"/>
</dbReference>
<dbReference type="InterPro" id="IPR050415">
    <property type="entry name" value="MRET"/>
</dbReference>
<dbReference type="InterPro" id="IPR001433">
    <property type="entry name" value="OxRdtase_FAD/NAD-bd"/>
</dbReference>
<dbReference type="InterPro" id="IPR011884">
    <property type="entry name" value="PaaE"/>
</dbReference>
<dbReference type="InterPro" id="IPR017938">
    <property type="entry name" value="Riboflavin_synthase-like_b-brl"/>
</dbReference>
<dbReference type="NCBIfam" id="TIGR02160">
    <property type="entry name" value="PA_CoA_Oxy5"/>
    <property type="match status" value="1"/>
</dbReference>
<dbReference type="PANTHER" id="PTHR47354:SF8">
    <property type="entry name" value="1,2-PHENYLACETYL-COA EPOXIDASE, SUBUNIT E"/>
    <property type="match status" value="1"/>
</dbReference>
<dbReference type="PANTHER" id="PTHR47354">
    <property type="entry name" value="NADH OXIDOREDUCTASE HCR"/>
    <property type="match status" value="1"/>
</dbReference>
<dbReference type="Pfam" id="PF00970">
    <property type="entry name" value="FAD_binding_6"/>
    <property type="match status" value="1"/>
</dbReference>
<dbReference type="Pfam" id="PF00111">
    <property type="entry name" value="Fer2"/>
    <property type="match status" value="1"/>
</dbReference>
<dbReference type="Pfam" id="PF00175">
    <property type="entry name" value="NAD_binding_1"/>
    <property type="match status" value="1"/>
</dbReference>
<dbReference type="PRINTS" id="PR00371">
    <property type="entry name" value="FPNCR"/>
</dbReference>
<dbReference type="PRINTS" id="PR00410">
    <property type="entry name" value="PHEHYDRXLASE"/>
</dbReference>
<dbReference type="SUPFAM" id="SSF54292">
    <property type="entry name" value="2Fe-2S ferredoxin-like"/>
    <property type="match status" value="1"/>
</dbReference>
<dbReference type="SUPFAM" id="SSF52343">
    <property type="entry name" value="Ferredoxin reductase-like, C-terminal NADP-linked domain"/>
    <property type="match status" value="1"/>
</dbReference>
<dbReference type="SUPFAM" id="SSF63380">
    <property type="entry name" value="Riboflavin synthase domain-like"/>
    <property type="match status" value="1"/>
</dbReference>
<dbReference type="PROSITE" id="PS00197">
    <property type="entry name" value="2FE2S_FER_1"/>
    <property type="match status" value="1"/>
</dbReference>
<dbReference type="PROSITE" id="PS51085">
    <property type="entry name" value="2FE2S_FER_2"/>
    <property type="match status" value="1"/>
</dbReference>
<dbReference type="PROSITE" id="PS51384">
    <property type="entry name" value="FAD_FR"/>
    <property type="match status" value="1"/>
</dbReference>
<comment type="function">
    <text evidence="5 6 7 8">Component of 1,2-phenylacetyl-CoA epoxidase multicomponent enzyme system which catalyzes the reduction of phenylacetyl-CoA (PA-CoA) to form 1,2-epoxyphenylacetyl-CoA. The subunit E is a reductase with a preference for NADPH and FAD, capable of reducing cytochrome c.</text>
</comment>
<comment type="cofactor">
    <cofactor evidence="7">
        <name>[2Fe-2S] cluster</name>
        <dbReference type="ChEBI" id="CHEBI:190135"/>
    </cofactor>
    <text evidence="7">Binds 1 [2Fe-2S] cluster.</text>
</comment>
<comment type="cofactor">
    <cofactor evidence="7">
        <name>FAD</name>
        <dbReference type="ChEBI" id="CHEBI:57692"/>
    </cofactor>
</comment>
<comment type="pathway">
    <text>Aromatic compound metabolism; phenylacetate degradation.</text>
</comment>
<comment type="induction">
    <text evidence="4 8">Activated by cAMP receptor protein (CRP), integration host factor (IHF) and by phenylacetyl-coenzyme A (PA-CoA) that prevents PaaX from binding its target sequences. Inhibited by PaaX.</text>
</comment>
<comment type="similarity">
    <text evidence="9">In the N-terminal section; belongs to the FAD-binding oxidoreductase type 6 family.</text>
</comment>
<evidence type="ECO:0000255" key="1"/>
<evidence type="ECO:0000255" key="2">
    <source>
        <dbReference type="PROSITE-ProRule" id="PRU00465"/>
    </source>
</evidence>
<evidence type="ECO:0000255" key="3">
    <source>
        <dbReference type="PROSITE-ProRule" id="PRU00716"/>
    </source>
</evidence>
<evidence type="ECO:0000269" key="4">
    <source>
    </source>
</evidence>
<evidence type="ECO:0000269" key="5">
    <source>
    </source>
</evidence>
<evidence type="ECO:0000269" key="6">
    <source>
    </source>
</evidence>
<evidence type="ECO:0000269" key="7">
    <source>
    </source>
</evidence>
<evidence type="ECO:0000269" key="8">
    <source>
    </source>
</evidence>
<evidence type="ECO:0000305" key="9"/>
<feature type="chain" id="PRO_0000058163" description="1,2-phenylacetyl-CoA epoxidase, subunit E">
    <location>
        <begin position="1"/>
        <end position="356"/>
    </location>
</feature>
<feature type="domain" description="FAD-binding FR-type" evidence="3">
    <location>
        <begin position="2"/>
        <end position="106"/>
    </location>
</feature>
<feature type="domain" description="2Fe-2S ferredoxin-type" evidence="2">
    <location>
        <begin position="262"/>
        <end position="354"/>
    </location>
</feature>
<feature type="region of interest" description="Oxidoreductase" evidence="1">
    <location>
        <begin position="112"/>
        <end position="228"/>
    </location>
</feature>
<feature type="binding site" evidence="2">
    <location>
        <position position="299"/>
    </location>
    <ligand>
        <name>[2Fe-2S] cluster</name>
        <dbReference type="ChEBI" id="CHEBI:190135"/>
    </ligand>
</feature>
<feature type="binding site" evidence="2">
    <location>
        <position position="304"/>
    </location>
    <ligand>
        <name>[2Fe-2S] cluster</name>
        <dbReference type="ChEBI" id="CHEBI:190135"/>
    </ligand>
</feature>
<feature type="binding site" evidence="2">
    <location>
        <position position="307"/>
    </location>
    <ligand>
        <name>[2Fe-2S] cluster</name>
        <dbReference type="ChEBI" id="CHEBI:190135"/>
    </ligand>
</feature>
<feature type="binding site" evidence="2">
    <location>
        <position position="337"/>
    </location>
    <ligand>
        <name>[2Fe-2S] cluster</name>
        <dbReference type="ChEBI" id="CHEBI:190135"/>
    </ligand>
</feature>
<feature type="sequence variant" description="In strain: W.">
    <original>S</original>
    <variation>P</variation>
    <location>
        <position position="14"/>
    </location>
</feature>
<feature type="sequence variant" description="In strain: W.">
    <original>P</original>
    <variation>S</variation>
    <location>
        <position position="169"/>
    </location>
</feature>
<feature type="sequence variant" description="In strain: W.">
    <original>DAET</original>
    <variation>ETEA</variation>
    <location>
        <begin position="224"/>
        <end position="227"/>
    </location>
</feature>
<sequence length="356" mass="39320">MTTFHSLTVAKVESETRDAVTITFAVPQPLQEAYRFRPGQHLTLKASFDGEELRRCYSICRSYLPGEISVAVKAIEGGRFSRYAREHIRQGMTLEVMVPQGHFGYQPQAERQGRYLAIAAGSGITPMLAIIATTLQTEPESQFTLIYGNRTSQSMMFRQALADLKDKYPQRLQLLCIFSQETLDSDLLHGRIDGEKLQSLGASLINFRLYDEAFICGPAAMMDDAETALKALGMPDKTIHLERFNTPGTRVKRSVNVQSDGQKVTVRQDGRDREIVLNADDESILDAALRQGADLPYACKGGVCATCKCKVLRGKVAMETNYSLEPDELAAGYVLSCQALPLTSDVVVDFDAKGMA</sequence>
<gene>
    <name type="primary">paaE</name>
    <name type="synonym">ydbR</name>
    <name type="ordered locus">b1392</name>
    <name type="ordered locus">JW1387</name>
</gene>
<accession>P76081</accession>
<accession>O53013</accession>
<accession>P77233</accession>
<name>PAAE_ECOLI</name>
<keyword id="KW-0001">2Fe-2S</keyword>
<keyword id="KW-0249">Electron transport</keyword>
<keyword id="KW-0274">FAD</keyword>
<keyword id="KW-0285">Flavoprotein</keyword>
<keyword id="KW-0408">Iron</keyword>
<keyword id="KW-0411">Iron-sulfur</keyword>
<keyword id="KW-0479">Metal-binding</keyword>
<keyword id="KW-0520">NAD</keyword>
<keyword id="KW-0560">Oxidoreductase</keyword>
<keyword id="KW-1185">Reference proteome</keyword>
<keyword id="KW-0813">Transport</keyword>